<sequence>MLPSQSPAIFTVSRLNQTVRLLLEHEMGQVWISGEISNFTQPASGHWYFTLKDDTAQVRCAMFRNSNRRVTFRPQHGQQVLVRANITLYEPRGDYQIIVESMQPAGEGLLQQKYEQLKAKLQAEGLFDQQYKKPLPSPAHCVGVITSKTGAALHDILHVLKRRDPSLPVIIYPTAVQGDDAPGQIVRAIELANQRNECDVLIVGRGGGSLEDLWSFNDERVARAIFASRIPVVSAVGHETDVTIADFVADLRAPTPSAAAEVVSRNQQELLRQVQSARQRLEMAMDYYLANRTRRFTQIHHRLQQQHPQLRLARQQTMLERLQKRMSFALENQLKRAGQQQQRLTQRLNQQNPQPKIHRAQTRIQQLEYRLAETLRAQLSATRERFGNAVTHLEAVSPLSTLARGYSVTSAADGAVLKQVKQVKVGETLTTRLGDGVVISEVSAVTKSRKPRKKA</sequence>
<accession>B7NQV5</accession>
<feature type="chain" id="PRO_1000122055" description="Exodeoxyribonuclease 7 large subunit">
    <location>
        <begin position="1"/>
        <end position="455"/>
    </location>
</feature>
<evidence type="ECO:0000255" key="1">
    <source>
        <dbReference type="HAMAP-Rule" id="MF_00378"/>
    </source>
</evidence>
<organism>
    <name type="scientific">Escherichia coli O7:K1 (strain IAI39 / ExPEC)</name>
    <dbReference type="NCBI Taxonomy" id="585057"/>
    <lineage>
        <taxon>Bacteria</taxon>
        <taxon>Pseudomonadati</taxon>
        <taxon>Pseudomonadota</taxon>
        <taxon>Gammaproteobacteria</taxon>
        <taxon>Enterobacterales</taxon>
        <taxon>Enterobacteriaceae</taxon>
        <taxon>Escherichia</taxon>
    </lineage>
</organism>
<proteinExistence type="inferred from homology"/>
<keyword id="KW-0963">Cytoplasm</keyword>
<keyword id="KW-0269">Exonuclease</keyword>
<keyword id="KW-0378">Hydrolase</keyword>
<keyword id="KW-0540">Nuclease</keyword>
<name>EX7L_ECO7I</name>
<dbReference type="EC" id="3.1.11.6" evidence="1"/>
<dbReference type="EMBL" id="CU928164">
    <property type="protein sequence ID" value="CAR18830.1"/>
    <property type="molecule type" value="Genomic_DNA"/>
</dbReference>
<dbReference type="RefSeq" id="WP_000937921.1">
    <property type="nucleotide sequence ID" value="NC_011750.1"/>
</dbReference>
<dbReference type="RefSeq" id="YP_002408645.1">
    <property type="nucleotide sequence ID" value="NC_011750.1"/>
</dbReference>
<dbReference type="SMR" id="B7NQV5"/>
<dbReference type="STRING" id="585057.ECIAI39_2707"/>
<dbReference type="KEGG" id="ect:ECIAI39_2707"/>
<dbReference type="PATRIC" id="fig|585057.6.peg.2815"/>
<dbReference type="HOGENOM" id="CLU_023625_3_1_6"/>
<dbReference type="Proteomes" id="UP000000749">
    <property type="component" value="Chromosome"/>
</dbReference>
<dbReference type="GO" id="GO:0005737">
    <property type="term" value="C:cytoplasm"/>
    <property type="evidence" value="ECO:0007669"/>
    <property type="project" value="UniProtKB-SubCell"/>
</dbReference>
<dbReference type="GO" id="GO:0009318">
    <property type="term" value="C:exodeoxyribonuclease VII complex"/>
    <property type="evidence" value="ECO:0007669"/>
    <property type="project" value="InterPro"/>
</dbReference>
<dbReference type="GO" id="GO:0008855">
    <property type="term" value="F:exodeoxyribonuclease VII activity"/>
    <property type="evidence" value="ECO:0007669"/>
    <property type="project" value="UniProtKB-UniRule"/>
</dbReference>
<dbReference type="GO" id="GO:0003676">
    <property type="term" value="F:nucleic acid binding"/>
    <property type="evidence" value="ECO:0007669"/>
    <property type="project" value="InterPro"/>
</dbReference>
<dbReference type="GO" id="GO:0006308">
    <property type="term" value="P:DNA catabolic process"/>
    <property type="evidence" value="ECO:0007669"/>
    <property type="project" value="UniProtKB-UniRule"/>
</dbReference>
<dbReference type="CDD" id="cd04489">
    <property type="entry name" value="ExoVII_LU_OBF"/>
    <property type="match status" value="1"/>
</dbReference>
<dbReference type="HAMAP" id="MF_00378">
    <property type="entry name" value="Exonuc_7_L"/>
    <property type="match status" value="1"/>
</dbReference>
<dbReference type="InterPro" id="IPR003753">
    <property type="entry name" value="Exonuc_VII_L"/>
</dbReference>
<dbReference type="InterPro" id="IPR020579">
    <property type="entry name" value="Exonuc_VII_lsu_C"/>
</dbReference>
<dbReference type="InterPro" id="IPR025824">
    <property type="entry name" value="OB-fold_nuc-bd_dom"/>
</dbReference>
<dbReference type="NCBIfam" id="TIGR00237">
    <property type="entry name" value="xseA"/>
    <property type="match status" value="1"/>
</dbReference>
<dbReference type="PANTHER" id="PTHR30008">
    <property type="entry name" value="EXODEOXYRIBONUCLEASE 7 LARGE SUBUNIT"/>
    <property type="match status" value="1"/>
</dbReference>
<dbReference type="PANTHER" id="PTHR30008:SF0">
    <property type="entry name" value="EXODEOXYRIBONUCLEASE 7 LARGE SUBUNIT"/>
    <property type="match status" value="1"/>
</dbReference>
<dbReference type="Pfam" id="PF02601">
    <property type="entry name" value="Exonuc_VII_L"/>
    <property type="match status" value="1"/>
</dbReference>
<dbReference type="Pfam" id="PF13742">
    <property type="entry name" value="tRNA_anti_2"/>
    <property type="match status" value="1"/>
</dbReference>
<protein>
    <recommendedName>
        <fullName evidence="1">Exodeoxyribonuclease 7 large subunit</fullName>
        <ecNumber evidence="1">3.1.11.6</ecNumber>
    </recommendedName>
    <alternativeName>
        <fullName evidence="1">Exodeoxyribonuclease VII large subunit</fullName>
        <shortName evidence="1">Exonuclease VII large subunit</shortName>
    </alternativeName>
</protein>
<gene>
    <name evidence="1" type="primary">xseA</name>
    <name type="ordered locus">ECIAI39_2707</name>
</gene>
<reference key="1">
    <citation type="journal article" date="2009" name="PLoS Genet.">
        <title>Organised genome dynamics in the Escherichia coli species results in highly diverse adaptive paths.</title>
        <authorList>
            <person name="Touchon M."/>
            <person name="Hoede C."/>
            <person name="Tenaillon O."/>
            <person name="Barbe V."/>
            <person name="Baeriswyl S."/>
            <person name="Bidet P."/>
            <person name="Bingen E."/>
            <person name="Bonacorsi S."/>
            <person name="Bouchier C."/>
            <person name="Bouvet O."/>
            <person name="Calteau A."/>
            <person name="Chiapello H."/>
            <person name="Clermont O."/>
            <person name="Cruveiller S."/>
            <person name="Danchin A."/>
            <person name="Diard M."/>
            <person name="Dossat C."/>
            <person name="Karoui M.E."/>
            <person name="Frapy E."/>
            <person name="Garry L."/>
            <person name="Ghigo J.M."/>
            <person name="Gilles A.M."/>
            <person name="Johnson J."/>
            <person name="Le Bouguenec C."/>
            <person name="Lescat M."/>
            <person name="Mangenot S."/>
            <person name="Martinez-Jehanne V."/>
            <person name="Matic I."/>
            <person name="Nassif X."/>
            <person name="Oztas S."/>
            <person name="Petit M.A."/>
            <person name="Pichon C."/>
            <person name="Rouy Z."/>
            <person name="Ruf C.S."/>
            <person name="Schneider D."/>
            <person name="Tourret J."/>
            <person name="Vacherie B."/>
            <person name="Vallenet D."/>
            <person name="Medigue C."/>
            <person name="Rocha E.P.C."/>
            <person name="Denamur E."/>
        </authorList>
    </citation>
    <scope>NUCLEOTIDE SEQUENCE [LARGE SCALE GENOMIC DNA]</scope>
    <source>
        <strain>IAI39 / ExPEC</strain>
    </source>
</reference>
<comment type="function">
    <text evidence="1">Bidirectionally degrades single-stranded DNA into large acid-insoluble oligonucleotides, which are then degraded further into small acid-soluble oligonucleotides.</text>
</comment>
<comment type="catalytic activity">
    <reaction evidence="1">
        <text>Exonucleolytic cleavage in either 5'- to 3'- or 3'- to 5'-direction to yield nucleoside 5'-phosphates.</text>
        <dbReference type="EC" id="3.1.11.6"/>
    </reaction>
</comment>
<comment type="subunit">
    <text evidence="1">Heterooligomer composed of large and small subunits.</text>
</comment>
<comment type="subcellular location">
    <subcellularLocation>
        <location evidence="1">Cytoplasm</location>
    </subcellularLocation>
</comment>
<comment type="similarity">
    <text evidence="1">Belongs to the XseA family.</text>
</comment>